<protein>
    <recommendedName>
        <fullName>Lectin-C</fullName>
    </recommendedName>
    <alternativeName>
        <fullName>PL-C</fullName>
    </alternativeName>
</protein>
<keyword id="KW-0002">3D-structure</keyword>
<keyword id="KW-0147">Chitin-binding</keyword>
<keyword id="KW-0903">Direct protein sequencing</keyword>
<keyword id="KW-1015">Disulfide bond</keyword>
<keyword id="KW-0430">Lectin</keyword>
<keyword id="KW-0497">Mitogen</keyword>
<keyword id="KW-0677">Repeat</keyword>
<keyword id="KW-0732">Signal</keyword>
<reference evidence="7" key="1">
    <citation type="submission" date="2000-12" db="EMBL/GenBank/DDBJ databases">
        <title>Identification and cDNA cloning of a systemic lectin, PL-C, a major component of pokeweed mitogens.</title>
        <authorList>
            <person name="Mizuta S."/>
            <person name="Ishiguro M."/>
        </authorList>
    </citation>
    <scope>NUCLEOTIDE SEQUENCE [MRNA]</scope>
</reference>
<reference evidence="6" key="2">
    <citation type="journal article" date="1995" name="Biosci. Biotechnol. Biochem.">
        <title>Purification and characterization of three mitogenic lectins from the roots of pokeweed (Phytolacca americana).</title>
        <authorList>
            <person name="Kino M."/>
            <person name="Yamaguchi K."/>
            <person name="Umekawa H."/>
            <person name="Funatsu G."/>
        </authorList>
    </citation>
    <scope>PROTEIN SEQUENCE OF 45-52</scope>
    <scope>FUNCTION</scope>
</reference>
<reference evidence="6" key="3">
    <citation type="journal article" date="1995" name="Biosci. Biotechnol. Biochem.">
        <title>The complete amino acid sequence of lectin-C from the roots of pokeweed (Phytolacca americana).</title>
        <authorList>
            <person name="Yamaguchi K."/>
            <person name="Mori A."/>
            <person name="Funatsu G."/>
        </authorList>
    </citation>
    <scope>PROTEIN SEQUENCE OF 45-170</scope>
    <scope>CHITIN-BINDING PROPERTIES</scope>
    <source>
        <tissue evidence="4">Root</tissue>
    </source>
</reference>
<reference evidence="6" key="4">
    <citation type="journal article" date="2003" name="J. Mol. Biol.">
        <title>Similarity between protein-protein and protein-carbohydrate interactions, revealed by two crystal structures of lectins from the roots of pokeweed.</title>
        <authorList>
            <person name="Hayashida M."/>
            <person name="Fujii T."/>
            <person name="Hamasu M."/>
            <person name="Ishiguro M."/>
            <person name="Hata Y."/>
        </authorList>
    </citation>
    <scope>X-RAY CRYSTALLOGRAPHY (1.8 ANGSTROMS) OF 45-170</scope>
</reference>
<sequence length="194" mass="21042">MKRSNSIAVMLVLVLSSLMLLLPVEGQGHEGHGVGEILLMGKLGAPVCGVRASGRVCPDGYCCSQWGYCGTTEEYCGKGCQSQCDYNRCGKEFGGKECHDELCCSQYGWCGNSDGHCGEGCQSQCSYWRCGKDFGGRLCTEDMCCSQYGWCGLTDDHCEDGCQSQCDLPTLLPSPLRRIIAIRKLKANLANMLS</sequence>
<name>LECC_PHYAM</name>
<organism>
    <name type="scientific">Phytolacca americana</name>
    <name type="common">American pokeweed</name>
    <name type="synonym">Phytolacca decandra</name>
    <dbReference type="NCBI Taxonomy" id="3527"/>
    <lineage>
        <taxon>Eukaryota</taxon>
        <taxon>Viridiplantae</taxon>
        <taxon>Streptophyta</taxon>
        <taxon>Embryophyta</taxon>
        <taxon>Tracheophyta</taxon>
        <taxon>Spermatophyta</taxon>
        <taxon>Magnoliopsida</taxon>
        <taxon>eudicotyledons</taxon>
        <taxon>Gunneridae</taxon>
        <taxon>Pentapetalae</taxon>
        <taxon>Caryophyllales</taxon>
        <taxon>Phytolaccaceae</taxon>
        <taxon>Phytolacca</taxon>
    </lineage>
</organism>
<evidence type="ECO:0000255" key="1"/>
<evidence type="ECO:0000255" key="2">
    <source>
        <dbReference type="PROSITE-ProRule" id="PRU00261"/>
    </source>
</evidence>
<evidence type="ECO:0000269" key="3">
    <source>
    </source>
</evidence>
<evidence type="ECO:0000269" key="4">
    <source>
    </source>
</evidence>
<evidence type="ECO:0000269" key="5">
    <source>
    </source>
</evidence>
<evidence type="ECO:0000305" key="6"/>
<evidence type="ECO:0000312" key="7">
    <source>
        <dbReference type="EMBL" id="BAB21577.1"/>
    </source>
</evidence>
<evidence type="ECO:0007829" key="8">
    <source>
        <dbReference type="PDB" id="1ULK"/>
    </source>
</evidence>
<comment type="function">
    <text evidence="4 5">N-acetyl-D-glucosamine binding lectin. Almost no hemagglutinating activity towards human erythrocytes. Low mitogenic activity towards human peripheral blood lymphocytes.</text>
</comment>
<comment type="subunit">
    <text evidence="3">Homodimer. The homodimers are asymmetric; formed in a 'head-to-tail' fashion via hydrophobic interactions between aromatic residues of the carbohydrate-binding sites of each subunit.</text>
</comment>
<accession>Q9AYP9</accession>
<accession>Q9S9F4</accession>
<proteinExistence type="evidence at protein level"/>
<feature type="signal peptide" evidence="1">
    <location>
        <begin position="1"/>
        <end position="26"/>
    </location>
</feature>
<feature type="propeptide" id="PRO_0000005271" description="Removed in mature form" evidence="1 4">
    <location>
        <begin position="27"/>
        <end position="44"/>
    </location>
</feature>
<feature type="chain" id="PRO_0000005272" description="Lectin-C" evidence="4">
    <location>
        <begin position="45"/>
        <end position="170"/>
    </location>
</feature>
<feature type="propeptide" id="PRO_0000005273" description="Removed in mature form" evidence="1 4">
    <location>
        <begin position="171"/>
        <end position="194"/>
    </location>
</feature>
<feature type="domain" description="Chitin-binding type-1 1" evidence="2">
    <location>
        <begin position="45"/>
        <end position="86"/>
    </location>
</feature>
<feature type="domain" description="Chitin-binding type-1 2" evidence="2">
    <location>
        <begin position="87"/>
        <end position="127"/>
    </location>
</feature>
<feature type="domain" description="Chitin-binding type-1 3" evidence="2">
    <location>
        <begin position="128"/>
        <end position="168"/>
    </location>
</feature>
<feature type="disulfide bond" evidence="2 3">
    <location>
        <begin position="48"/>
        <end position="63"/>
    </location>
</feature>
<feature type="disulfide bond" evidence="2 3">
    <location>
        <begin position="57"/>
        <end position="69"/>
    </location>
</feature>
<feature type="disulfide bond" evidence="2 3">
    <location>
        <begin position="62"/>
        <end position="76"/>
    </location>
</feature>
<feature type="disulfide bond" evidence="2 3">
    <location>
        <begin position="80"/>
        <end position="84"/>
    </location>
</feature>
<feature type="disulfide bond" evidence="2 3">
    <location>
        <begin position="89"/>
        <end position="104"/>
    </location>
</feature>
<feature type="disulfide bond" evidence="2 3">
    <location>
        <begin position="98"/>
        <end position="110"/>
    </location>
</feature>
<feature type="disulfide bond" evidence="2 3">
    <location>
        <begin position="103"/>
        <end position="117"/>
    </location>
</feature>
<feature type="disulfide bond" evidence="2 3">
    <location>
        <begin position="121"/>
        <end position="125"/>
    </location>
</feature>
<feature type="disulfide bond" evidence="2 3">
    <location>
        <begin position="130"/>
        <end position="145"/>
    </location>
</feature>
<feature type="disulfide bond" evidence="2 3">
    <location>
        <begin position="139"/>
        <end position="151"/>
    </location>
</feature>
<feature type="disulfide bond" evidence="2 3">
    <location>
        <begin position="144"/>
        <end position="158"/>
    </location>
</feature>
<feature type="disulfide bond" evidence="2 3">
    <location>
        <begin position="162"/>
        <end position="166"/>
    </location>
</feature>
<feature type="helix" evidence="8">
    <location>
        <begin position="50"/>
        <end position="52"/>
    </location>
</feature>
<feature type="helix" evidence="8">
    <location>
        <begin position="58"/>
        <end position="60"/>
    </location>
</feature>
<feature type="strand" evidence="8">
    <location>
        <begin position="69"/>
        <end position="72"/>
    </location>
</feature>
<feature type="helix" evidence="8">
    <location>
        <begin position="73"/>
        <end position="76"/>
    </location>
</feature>
<feature type="turn" evidence="8">
    <location>
        <begin position="84"/>
        <end position="87"/>
    </location>
</feature>
<feature type="helix" evidence="8">
    <location>
        <begin position="91"/>
        <end position="93"/>
    </location>
</feature>
<feature type="helix" evidence="8">
    <location>
        <begin position="99"/>
        <end position="101"/>
    </location>
</feature>
<feature type="strand" evidence="8">
    <location>
        <begin position="108"/>
        <end position="111"/>
    </location>
</feature>
<feature type="helix" evidence="8">
    <location>
        <begin position="114"/>
        <end position="117"/>
    </location>
</feature>
<feature type="turn" evidence="8">
    <location>
        <begin position="125"/>
        <end position="128"/>
    </location>
</feature>
<feature type="helix" evidence="8">
    <location>
        <begin position="132"/>
        <end position="134"/>
    </location>
</feature>
<feature type="strand" evidence="8">
    <location>
        <begin position="149"/>
        <end position="152"/>
    </location>
</feature>
<feature type="helix" evidence="8">
    <location>
        <begin position="155"/>
        <end position="158"/>
    </location>
</feature>
<dbReference type="EMBL" id="AB052963">
    <property type="protein sequence ID" value="BAB21577.1"/>
    <property type="molecule type" value="mRNA"/>
</dbReference>
<dbReference type="PDB" id="1ULK">
    <property type="method" value="X-ray"/>
    <property type="resolution" value="1.80 A"/>
    <property type="chains" value="A/B=45-170"/>
</dbReference>
<dbReference type="PDBsum" id="1ULK"/>
<dbReference type="SMR" id="Q9AYP9"/>
<dbReference type="CAZy" id="CBM18">
    <property type="family name" value="Carbohydrate-Binding Module Family 18"/>
</dbReference>
<dbReference type="UniLectin" id="Q9AYP9"/>
<dbReference type="EvolutionaryTrace" id="Q9AYP9"/>
<dbReference type="GO" id="GO:0030246">
    <property type="term" value="F:carbohydrate binding"/>
    <property type="evidence" value="ECO:0007669"/>
    <property type="project" value="UniProtKB-KW"/>
</dbReference>
<dbReference type="GO" id="GO:0008061">
    <property type="term" value="F:chitin binding"/>
    <property type="evidence" value="ECO:0000314"/>
    <property type="project" value="UniProtKB"/>
</dbReference>
<dbReference type="GO" id="GO:0051781">
    <property type="term" value="P:positive regulation of cell division"/>
    <property type="evidence" value="ECO:0007669"/>
    <property type="project" value="UniProtKB-KW"/>
</dbReference>
<dbReference type="GO" id="GO:0045840">
    <property type="term" value="P:positive regulation of mitotic nuclear division"/>
    <property type="evidence" value="ECO:0000314"/>
    <property type="project" value="UniProtKB"/>
</dbReference>
<dbReference type="CDD" id="cd00035">
    <property type="entry name" value="ChtBD1"/>
    <property type="match status" value="3"/>
</dbReference>
<dbReference type="FunFam" id="3.30.60.10:FF:000001">
    <property type="entry name" value="Basic endochitinase"/>
    <property type="match status" value="1"/>
</dbReference>
<dbReference type="Gene3D" id="3.30.60.10">
    <property type="entry name" value="Endochitinase-like"/>
    <property type="match status" value="3"/>
</dbReference>
<dbReference type="InterPro" id="IPR001002">
    <property type="entry name" value="Chitin-bd_1"/>
</dbReference>
<dbReference type="InterPro" id="IPR018371">
    <property type="entry name" value="Chitin-binding_1_CS"/>
</dbReference>
<dbReference type="InterPro" id="IPR036861">
    <property type="entry name" value="Endochitinase-like_sf"/>
</dbReference>
<dbReference type="PANTHER" id="PTHR47849">
    <property type="entry name" value="CHITIN-BINDING LECTIN 1"/>
    <property type="match status" value="1"/>
</dbReference>
<dbReference type="PANTHER" id="PTHR47849:SF8">
    <property type="entry name" value="LECTIN"/>
    <property type="match status" value="1"/>
</dbReference>
<dbReference type="Pfam" id="PF00187">
    <property type="entry name" value="Chitin_bind_1"/>
    <property type="match status" value="3"/>
</dbReference>
<dbReference type="PRINTS" id="PR00451">
    <property type="entry name" value="CHITINBINDNG"/>
</dbReference>
<dbReference type="SMART" id="SM00270">
    <property type="entry name" value="ChtBD1"/>
    <property type="match status" value="3"/>
</dbReference>
<dbReference type="SUPFAM" id="SSF57016">
    <property type="entry name" value="Plant lectins/antimicrobial peptides"/>
    <property type="match status" value="3"/>
</dbReference>
<dbReference type="PROSITE" id="PS00026">
    <property type="entry name" value="CHIT_BIND_I_1"/>
    <property type="match status" value="1"/>
</dbReference>
<dbReference type="PROSITE" id="PS50941">
    <property type="entry name" value="CHIT_BIND_I_2"/>
    <property type="match status" value="3"/>
</dbReference>